<keyword id="KW-0997">Cell inner membrane</keyword>
<keyword id="KW-1003">Cell membrane</keyword>
<keyword id="KW-0406">Ion transport</keyword>
<keyword id="KW-0464">Manganese</keyword>
<keyword id="KW-0472">Membrane</keyword>
<keyword id="KW-1185">Reference proteome</keyword>
<keyword id="KW-0812">Transmembrane</keyword>
<keyword id="KW-1133">Transmembrane helix</keyword>
<keyword id="KW-0813">Transport</keyword>
<name>MNTP_CAMHC</name>
<comment type="function">
    <text evidence="1">Probably functions as a manganese efflux pump.</text>
</comment>
<comment type="subcellular location">
    <subcellularLocation>
        <location evidence="1">Cell inner membrane</location>
        <topology evidence="1">Multi-pass membrane protein</topology>
    </subcellularLocation>
</comment>
<comment type="similarity">
    <text evidence="1">Belongs to the MntP (TC 9.B.29) family.</text>
</comment>
<reference key="1">
    <citation type="submission" date="2007-07" db="EMBL/GenBank/DDBJ databases">
        <title>Complete genome sequence of Campylobacter hominis ATCC BAA-381, a commensal isolated from the human gastrointestinal tract.</title>
        <authorList>
            <person name="Fouts D.E."/>
            <person name="Mongodin E.F."/>
            <person name="Puiu D."/>
            <person name="Sebastian Y."/>
            <person name="Miller W.G."/>
            <person name="Mandrell R.E."/>
            <person name="Nelson K.E."/>
        </authorList>
    </citation>
    <scope>NUCLEOTIDE SEQUENCE [LARGE SCALE GENOMIC DNA]</scope>
    <source>
        <strain>ATCC BAA-381 / DSM 21671 / CCUG 45161 / LMG 19568 / NCTC 13146 / CH001A</strain>
    </source>
</reference>
<protein>
    <recommendedName>
        <fullName evidence="1">Putative manganese efflux pump MntP</fullName>
    </recommendedName>
</protein>
<organism>
    <name type="scientific">Campylobacter hominis (strain ATCC BAA-381 / DSM 21671 / CCUG 45161 / LMG 19568 / NCTC 13146 / CH001A)</name>
    <dbReference type="NCBI Taxonomy" id="360107"/>
    <lineage>
        <taxon>Bacteria</taxon>
        <taxon>Pseudomonadati</taxon>
        <taxon>Campylobacterota</taxon>
        <taxon>Epsilonproteobacteria</taxon>
        <taxon>Campylobacterales</taxon>
        <taxon>Campylobacteraceae</taxon>
        <taxon>Campylobacter</taxon>
    </lineage>
</organism>
<sequence length="182" mass="19619">MEILLLAVALSMDCVALSMSNGAKCANYGIFRITKVSFVYGFFQGAMPIIGFFLGALFVGFIEQIDHFVAFAILGFLGVKMIFDSRENSDEITANLGLKELISGAVATSIDALAVGVTFSFTSLNIWFSCAIIAFVCFILSFAATFIGKKLGEIFKDKALILGGLILIFIGFKILITHLGIL</sequence>
<gene>
    <name evidence="1" type="primary">mntP</name>
    <name type="ordered locus">CHAB381_1654</name>
</gene>
<feature type="chain" id="PRO_1000068630" description="Putative manganese efflux pump MntP">
    <location>
        <begin position="1"/>
        <end position="182"/>
    </location>
</feature>
<feature type="transmembrane region" description="Helical" evidence="1">
    <location>
        <begin position="3"/>
        <end position="23"/>
    </location>
</feature>
<feature type="transmembrane region" description="Helical" evidence="1">
    <location>
        <begin position="42"/>
        <end position="62"/>
    </location>
</feature>
<feature type="transmembrane region" description="Helical" evidence="1">
    <location>
        <begin position="65"/>
        <end position="85"/>
    </location>
</feature>
<feature type="transmembrane region" description="Helical" evidence="1">
    <location>
        <begin position="126"/>
        <end position="146"/>
    </location>
</feature>
<feature type="transmembrane region" description="Helical" evidence="1">
    <location>
        <begin position="161"/>
        <end position="181"/>
    </location>
</feature>
<evidence type="ECO:0000255" key="1">
    <source>
        <dbReference type="HAMAP-Rule" id="MF_01521"/>
    </source>
</evidence>
<proteinExistence type="inferred from homology"/>
<dbReference type="EMBL" id="CP000776">
    <property type="protein sequence ID" value="ABS51606.1"/>
    <property type="molecule type" value="Genomic_DNA"/>
</dbReference>
<dbReference type="RefSeq" id="WP_012109479.1">
    <property type="nucleotide sequence ID" value="NC_009714.1"/>
</dbReference>
<dbReference type="SMR" id="A7I3T2"/>
<dbReference type="STRING" id="360107.CHAB381_1654"/>
<dbReference type="KEGG" id="cha:CHAB381_1654"/>
<dbReference type="eggNOG" id="COG1971">
    <property type="taxonomic scope" value="Bacteria"/>
</dbReference>
<dbReference type="HOGENOM" id="CLU_096410_3_0_7"/>
<dbReference type="OrthoDB" id="9811590at2"/>
<dbReference type="Proteomes" id="UP000002407">
    <property type="component" value="Chromosome"/>
</dbReference>
<dbReference type="GO" id="GO:0005886">
    <property type="term" value="C:plasma membrane"/>
    <property type="evidence" value="ECO:0007669"/>
    <property type="project" value="UniProtKB-SubCell"/>
</dbReference>
<dbReference type="GO" id="GO:0005384">
    <property type="term" value="F:manganese ion transmembrane transporter activity"/>
    <property type="evidence" value="ECO:0007669"/>
    <property type="project" value="UniProtKB-UniRule"/>
</dbReference>
<dbReference type="HAMAP" id="MF_01521">
    <property type="entry name" value="MntP_pump"/>
    <property type="match status" value="1"/>
</dbReference>
<dbReference type="InterPro" id="IPR003810">
    <property type="entry name" value="Mntp/YtaF"/>
</dbReference>
<dbReference type="InterPro" id="IPR022929">
    <property type="entry name" value="Put_MntP"/>
</dbReference>
<dbReference type="PANTHER" id="PTHR35529">
    <property type="entry name" value="MANGANESE EFFLUX PUMP MNTP-RELATED"/>
    <property type="match status" value="1"/>
</dbReference>
<dbReference type="PANTHER" id="PTHR35529:SF1">
    <property type="entry name" value="MANGANESE EFFLUX PUMP MNTP-RELATED"/>
    <property type="match status" value="1"/>
</dbReference>
<dbReference type="Pfam" id="PF02659">
    <property type="entry name" value="Mntp"/>
    <property type="match status" value="1"/>
</dbReference>
<accession>A7I3T2</accession>